<sequence>MPPKGKSGSGKGGKGKAASGSESSEKKAQGPKGGGNAVKVRHILCEKHGKILEAMEKLKSGMKFNEVAAQYSEDKARQGGDLGWMTRGSMVGPFQEAAFALPISVLDKPVFTDPPVKTKFGYHIIMVEGRK</sequence>
<evidence type="ECO:0000250" key="1"/>
<evidence type="ECO:0000250" key="2">
    <source>
        <dbReference type="UniProtKB" id="Q9Y237"/>
    </source>
</evidence>
<evidence type="ECO:0000255" key="3">
    <source>
        <dbReference type="PROSITE-ProRule" id="PRU00278"/>
    </source>
</evidence>
<evidence type="ECO:0000256" key="4">
    <source>
        <dbReference type="SAM" id="MobiDB-lite"/>
    </source>
</evidence>
<evidence type="ECO:0000305" key="5"/>
<comment type="function">
    <text evidence="1">Involved as a ribosomal RNA processing factor in ribosome biogenesis. Binds to tightly bent AT-rich stretches of double-stranded DNA (By similarity).</text>
</comment>
<comment type="catalytic activity">
    <reaction>
        <text>[protein]-peptidylproline (omega=180) = [protein]-peptidylproline (omega=0)</text>
        <dbReference type="Rhea" id="RHEA:16237"/>
        <dbReference type="Rhea" id="RHEA-COMP:10747"/>
        <dbReference type="Rhea" id="RHEA-COMP:10748"/>
        <dbReference type="ChEBI" id="CHEBI:83833"/>
        <dbReference type="ChEBI" id="CHEBI:83834"/>
        <dbReference type="EC" id="5.2.1.8"/>
    </reaction>
</comment>
<comment type="subunit">
    <text evidence="1">Found in pre-ribosomal ribonucleoprotein (pre-rRNP) complexes.</text>
</comment>
<comment type="subcellular location">
    <subcellularLocation>
        <location evidence="1">Nucleus</location>
        <location evidence="1">Nucleolus</location>
    </subcellularLocation>
    <subcellularLocation>
        <location evidence="1">Cytoplasm</location>
        <location evidence="1">Cytoskeleton</location>
        <location evidence="1">Spindle</location>
    </subcellularLocation>
    <subcellularLocation>
        <location evidence="1">Cytoplasm</location>
    </subcellularLocation>
    <text evidence="1">Colocalizes in the nucleolus during interphase and on the spindle apparatus during mitosis with NPM1.</text>
</comment>
<comment type="PTM">
    <text evidence="1">Phosphorylated. Phosphorylation occurs both in the nucleus and the cytoplasm. Phosphorylation at Ser-19 does not affect its PPIase activity but is required for nuclear localization, and the dephosphorylation is a prerequisite for the binding to DNA. The unphosphorylated form associates with the pre-rRNP complexes in the nucleus (By similarity).</text>
</comment>
<comment type="similarity">
    <text evidence="5">Belongs to the PpiC/parvulin rotamase family. PIN4 subfamily.</text>
</comment>
<gene>
    <name type="primary">PIN4</name>
</gene>
<proteinExistence type="evidence at transcript level"/>
<keyword id="KW-0963">Cytoplasm</keyword>
<keyword id="KW-0206">Cytoskeleton</keyword>
<keyword id="KW-0238">DNA-binding</keyword>
<keyword id="KW-0413">Isomerase</keyword>
<keyword id="KW-0539">Nucleus</keyword>
<keyword id="KW-0597">Phosphoprotein</keyword>
<keyword id="KW-1185">Reference proteome</keyword>
<keyword id="KW-0697">Rotamase</keyword>
<feature type="chain" id="PRO_0000379924" description="Peptidyl-prolyl cis-trans isomerase NIMA-interacting 4">
    <location>
        <begin position="1"/>
        <end position="131"/>
    </location>
</feature>
<feature type="domain" description="PpiC" evidence="3">
    <location>
        <begin position="35"/>
        <end position="129"/>
    </location>
</feature>
<feature type="region of interest" description="Necessary for association with the pre-rRNP complexes" evidence="1">
    <location>
        <begin position="1"/>
        <end position="41"/>
    </location>
</feature>
<feature type="region of interest" description="Disordered" evidence="4">
    <location>
        <begin position="1"/>
        <end position="37"/>
    </location>
</feature>
<feature type="region of interest" description="Necessary for nuclear localization and DNA-binding" evidence="1">
    <location>
        <begin position="1"/>
        <end position="25"/>
    </location>
</feature>
<feature type="modified residue" description="Phosphoserine; by CK2" evidence="2">
    <location>
        <position position="19"/>
    </location>
</feature>
<protein>
    <recommendedName>
        <fullName>Peptidyl-prolyl cis-trans isomerase NIMA-interacting 4</fullName>
        <ecNumber>5.2.1.8</ecNumber>
    </recommendedName>
    <alternativeName>
        <fullName>Parvulin-14</fullName>
        <shortName>Par14</shortName>
    </alternativeName>
    <alternativeName>
        <fullName>Peptidyl-prolyl cis-trans isomerase Pin4</fullName>
        <shortName>PPIase Pin4</shortName>
    </alternativeName>
    <alternativeName>
        <fullName>Rotamase Pin4</fullName>
    </alternativeName>
</protein>
<reference key="1">
    <citation type="submission" date="2007-07" db="EMBL/GenBank/DDBJ databases">
        <authorList>
            <consortium name="NIH - Mammalian Gene Collection (MGC) project"/>
        </authorList>
    </citation>
    <scope>NUCLEOTIDE SEQUENCE [LARGE SCALE MRNA]</scope>
    <source>
        <strain>Hereford</strain>
        <tissue>Heart ventricle</tissue>
    </source>
</reference>
<name>PIN4_BOVIN</name>
<dbReference type="EC" id="5.2.1.8"/>
<dbReference type="EMBL" id="BC149559">
    <property type="protein sequence ID" value="AAI49560.1"/>
    <property type="molecule type" value="mRNA"/>
</dbReference>
<dbReference type="RefSeq" id="NP_001099127.1">
    <property type="nucleotide sequence ID" value="NM_001105657.1"/>
</dbReference>
<dbReference type="SMR" id="A6QPY8"/>
<dbReference type="FunCoup" id="A6QPY8">
    <property type="interactions" value="2174"/>
</dbReference>
<dbReference type="STRING" id="9913.ENSBTAP00000054808"/>
<dbReference type="PaxDb" id="9913-ENSBTAP00000054808"/>
<dbReference type="Ensembl" id="ENSBTAT00000063342.2">
    <property type="protein sequence ID" value="ENSBTAP00000054808.1"/>
    <property type="gene ID" value="ENSBTAG00000047376.3"/>
</dbReference>
<dbReference type="GeneID" id="100126055"/>
<dbReference type="KEGG" id="bta:100126055"/>
<dbReference type="CTD" id="5303"/>
<dbReference type="VEuPathDB" id="HostDB:ENSBTAG00000047376"/>
<dbReference type="VGNC" id="VGNC:32903">
    <property type="gene designation" value="PIN4"/>
</dbReference>
<dbReference type="eggNOG" id="KOG3258">
    <property type="taxonomic scope" value="Eukaryota"/>
</dbReference>
<dbReference type="GeneTree" id="ENSGT00510000047029"/>
<dbReference type="HOGENOM" id="CLU_090028_2_1_1"/>
<dbReference type="InParanoid" id="A6QPY8"/>
<dbReference type="OMA" id="NAINVRH"/>
<dbReference type="OrthoDB" id="1911748at2759"/>
<dbReference type="TreeFam" id="TF101102"/>
<dbReference type="Proteomes" id="UP000009136">
    <property type="component" value="Chromosome X"/>
</dbReference>
<dbReference type="Bgee" id="ENSBTAG00000047376">
    <property type="expression patterns" value="Expressed in oocyte and 105 other cell types or tissues"/>
</dbReference>
<dbReference type="GO" id="GO:0005737">
    <property type="term" value="C:cytoplasm"/>
    <property type="evidence" value="ECO:0007669"/>
    <property type="project" value="UniProtKB-SubCell"/>
</dbReference>
<dbReference type="GO" id="GO:0005730">
    <property type="term" value="C:nucleolus"/>
    <property type="evidence" value="ECO:0007669"/>
    <property type="project" value="UniProtKB-SubCell"/>
</dbReference>
<dbReference type="GO" id="GO:0005634">
    <property type="term" value="C:nucleus"/>
    <property type="evidence" value="ECO:0000318"/>
    <property type="project" value="GO_Central"/>
</dbReference>
<dbReference type="GO" id="GO:0005819">
    <property type="term" value="C:spindle"/>
    <property type="evidence" value="ECO:0007669"/>
    <property type="project" value="UniProtKB-SubCell"/>
</dbReference>
<dbReference type="GO" id="GO:0003677">
    <property type="term" value="F:DNA binding"/>
    <property type="evidence" value="ECO:0007669"/>
    <property type="project" value="UniProtKB-KW"/>
</dbReference>
<dbReference type="GO" id="GO:0003755">
    <property type="term" value="F:peptidyl-prolyl cis-trans isomerase activity"/>
    <property type="evidence" value="ECO:0007669"/>
    <property type="project" value="UniProtKB-KW"/>
</dbReference>
<dbReference type="GO" id="GO:0006364">
    <property type="term" value="P:rRNA processing"/>
    <property type="evidence" value="ECO:0007669"/>
    <property type="project" value="InterPro"/>
</dbReference>
<dbReference type="FunFam" id="3.10.50.40:FF:000015">
    <property type="entry name" value="Peptidyl-prolyl cis-trans isomerase"/>
    <property type="match status" value="1"/>
</dbReference>
<dbReference type="Gene3D" id="3.10.50.40">
    <property type="match status" value="1"/>
</dbReference>
<dbReference type="InterPro" id="IPR043323">
    <property type="entry name" value="PIN4"/>
</dbReference>
<dbReference type="InterPro" id="IPR046357">
    <property type="entry name" value="PPIase_dom_sf"/>
</dbReference>
<dbReference type="InterPro" id="IPR000297">
    <property type="entry name" value="PPIase_PpiC"/>
</dbReference>
<dbReference type="PANTHER" id="PTHR45995">
    <property type="match status" value="1"/>
</dbReference>
<dbReference type="Pfam" id="PF13616">
    <property type="entry name" value="Rotamase_3"/>
    <property type="match status" value="1"/>
</dbReference>
<dbReference type="SUPFAM" id="SSF54534">
    <property type="entry name" value="FKBP-like"/>
    <property type="match status" value="1"/>
</dbReference>
<dbReference type="PROSITE" id="PS50198">
    <property type="entry name" value="PPIC_PPIASE_2"/>
    <property type="match status" value="1"/>
</dbReference>
<organism>
    <name type="scientific">Bos taurus</name>
    <name type="common">Bovine</name>
    <dbReference type="NCBI Taxonomy" id="9913"/>
    <lineage>
        <taxon>Eukaryota</taxon>
        <taxon>Metazoa</taxon>
        <taxon>Chordata</taxon>
        <taxon>Craniata</taxon>
        <taxon>Vertebrata</taxon>
        <taxon>Euteleostomi</taxon>
        <taxon>Mammalia</taxon>
        <taxon>Eutheria</taxon>
        <taxon>Laurasiatheria</taxon>
        <taxon>Artiodactyla</taxon>
        <taxon>Ruminantia</taxon>
        <taxon>Pecora</taxon>
        <taxon>Bovidae</taxon>
        <taxon>Bovinae</taxon>
        <taxon>Bos</taxon>
    </lineage>
</organism>
<accession>A6QPY8</accession>